<proteinExistence type="inferred from homology"/>
<comment type="function">
    <text evidence="1">Catalyzes the decarboxylation of four acetate groups of uroporphyrinogen-III to yield coproporphyrinogen-III.</text>
</comment>
<comment type="catalytic activity">
    <reaction evidence="1">
        <text>uroporphyrinogen III + 4 H(+) = coproporphyrinogen III + 4 CO2</text>
        <dbReference type="Rhea" id="RHEA:19865"/>
        <dbReference type="ChEBI" id="CHEBI:15378"/>
        <dbReference type="ChEBI" id="CHEBI:16526"/>
        <dbReference type="ChEBI" id="CHEBI:57308"/>
        <dbReference type="ChEBI" id="CHEBI:57309"/>
        <dbReference type="EC" id="4.1.1.37"/>
    </reaction>
</comment>
<comment type="pathway">
    <text evidence="1">Porphyrin-containing compound metabolism; protoporphyrin-IX biosynthesis; coproporphyrinogen-III from 5-aminolevulinate: step 4/4.</text>
</comment>
<comment type="subunit">
    <text evidence="1">Homodimer.</text>
</comment>
<comment type="subcellular location">
    <subcellularLocation>
        <location evidence="1">Cytoplasm</location>
    </subcellularLocation>
</comment>
<comment type="similarity">
    <text evidence="1">Belongs to the uroporphyrinogen decarboxylase family.</text>
</comment>
<reference key="1">
    <citation type="journal article" date="2003" name="Proc. Natl. Acad. Sci. U.S.A.">
        <title>Complete genome sequence of the Q-fever pathogen, Coxiella burnetii.</title>
        <authorList>
            <person name="Seshadri R."/>
            <person name="Paulsen I.T."/>
            <person name="Eisen J.A."/>
            <person name="Read T.D."/>
            <person name="Nelson K.E."/>
            <person name="Nelson W.C."/>
            <person name="Ward N.L."/>
            <person name="Tettelin H."/>
            <person name="Davidsen T.M."/>
            <person name="Beanan M.J."/>
            <person name="DeBoy R.T."/>
            <person name="Daugherty S.C."/>
            <person name="Brinkac L.M."/>
            <person name="Madupu R."/>
            <person name="Dodson R.J."/>
            <person name="Khouri H.M."/>
            <person name="Lee K.H."/>
            <person name="Carty H.A."/>
            <person name="Scanlan D."/>
            <person name="Heinzen R.A."/>
            <person name="Thompson H.A."/>
            <person name="Samuel J.E."/>
            <person name="Fraser C.M."/>
            <person name="Heidelberg J.F."/>
        </authorList>
    </citation>
    <scope>NUCLEOTIDE SEQUENCE [LARGE SCALE GENOMIC DNA]</scope>
    <source>
        <strain>RSA 493 / Nine Mile phase I</strain>
    </source>
</reference>
<name>DCUP_COXBU</name>
<sequence length="361" mass="40203">MLRLKNDRFIRALLRQPVDRTPVWIMRQAGRYLPEYRQLREKVPNFMAFCKTPELACEATLQPLRRFPLDAAIIFSDILTIPDAMGVDLHIAPTVGPVIRNPVRSAQDVNRLQMPAVEEALSYLFDAIRLTVKALDHRVPLIGFAGSPWTLACYMTEGQSSKTFLTARAMLYQQPDVFHTLLQKLTTLTIAYLNAQIKAGADVVMLFDTWGGLLTPSLYRQFSLDYLSQIAAEVVRQKNGRKIPLIFFTKNGGQWLESIANSGCDAVGLDWTTDIGQARRRVGDRVALQGNLDPAILLSNPESISTAAVDILKSYGQGSGHVFNLGHGIDPSTPIENVAALVEAVQNFSIKNEKPISSYYR</sequence>
<keyword id="KW-0963">Cytoplasm</keyword>
<keyword id="KW-0210">Decarboxylase</keyword>
<keyword id="KW-0456">Lyase</keyword>
<keyword id="KW-0627">Porphyrin biosynthesis</keyword>
<keyword id="KW-1185">Reference proteome</keyword>
<evidence type="ECO:0000255" key="1">
    <source>
        <dbReference type="HAMAP-Rule" id="MF_00218"/>
    </source>
</evidence>
<accession>Q83EP0</accession>
<organism>
    <name type="scientific">Coxiella burnetii (strain RSA 493 / Nine Mile phase I)</name>
    <dbReference type="NCBI Taxonomy" id="227377"/>
    <lineage>
        <taxon>Bacteria</taxon>
        <taxon>Pseudomonadati</taxon>
        <taxon>Pseudomonadota</taxon>
        <taxon>Gammaproteobacteria</taxon>
        <taxon>Legionellales</taxon>
        <taxon>Coxiellaceae</taxon>
        <taxon>Coxiella</taxon>
    </lineage>
</organism>
<protein>
    <recommendedName>
        <fullName evidence="1">Uroporphyrinogen decarboxylase</fullName>
        <shortName evidence="1">UPD</shortName>
        <shortName evidence="1">URO-D</shortName>
        <ecNumber evidence="1">4.1.1.37</ecNumber>
    </recommendedName>
</protein>
<dbReference type="EC" id="4.1.1.37" evidence="1"/>
<dbReference type="EMBL" id="AE016828">
    <property type="protein sequence ID" value="AAO89833.1"/>
    <property type="molecule type" value="Genomic_DNA"/>
</dbReference>
<dbReference type="RefSeq" id="NP_819319.1">
    <property type="nucleotide sequence ID" value="NC_002971.4"/>
</dbReference>
<dbReference type="RefSeq" id="WP_010957475.1">
    <property type="nucleotide sequence ID" value="NC_002971.4"/>
</dbReference>
<dbReference type="SMR" id="Q83EP0"/>
<dbReference type="STRING" id="227377.CBU_0275"/>
<dbReference type="EnsemblBacteria" id="AAO89833">
    <property type="protein sequence ID" value="AAO89833"/>
    <property type="gene ID" value="CBU_0275"/>
</dbReference>
<dbReference type="GeneID" id="1208156"/>
<dbReference type="KEGG" id="cbu:CBU_0275"/>
<dbReference type="PATRIC" id="fig|227377.7.peg.270"/>
<dbReference type="eggNOG" id="COG0407">
    <property type="taxonomic scope" value="Bacteria"/>
</dbReference>
<dbReference type="HOGENOM" id="CLU_040933_0_0_6"/>
<dbReference type="OrthoDB" id="9806656at2"/>
<dbReference type="UniPathway" id="UPA00251">
    <property type="reaction ID" value="UER00321"/>
</dbReference>
<dbReference type="Proteomes" id="UP000002671">
    <property type="component" value="Chromosome"/>
</dbReference>
<dbReference type="GO" id="GO:0005829">
    <property type="term" value="C:cytosol"/>
    <property type="evidence" value="ECO:0000318"/>
    <property type="project" value="GO_Central"/>
</dbReference>
<dbReference type="GO" id="GO:0004853">
    <property type="term" value="F:uroporphyrinogen decarboxylase activity"/>
    <property type="evidence" value="ECO:0000318"/>
    <property type="project" value="GO_Central"/>
</dbReference>
<dbReference type="GO" id="GO:0006783">
    <property type="term" value="P:heme biosynthetic process"/>
    <property type="evidence" value="ECO:0000318"/>
    <property type="project" value="GO_Central"/>
</dbReference>
<dbReference type="GO" id="GO:0019353">
    <property type="term" value="P:protoporphyrinogen IX biosynthetic process from glutamate"/>
    <property type="evidence" value="ECO:0000318"/>
    <property type="project" value="GO_Central"/>
</dbReference>
<dbReference type="CDD" id="cd00717">
    <property type="entry name" value="URO-D"/>
    <property type="match status" value="1"/>
</dbReference>
<dbReference type="FunFam" id="3.20.20.210:FF:000017">
    <property type="entry name" value="Uroporphyrinogen decarboxylase"/>
    <property type="match status" value="1"/>
</dbReference>
<dbReference type="Gene3D" id="3.20.20.210">
    <property type="match status" value="1"/>
</dbReference>
<dbReference type="HAMAP" id="MF_00218">
    <property type="entry name" value="URO_D"/>
    <property type="match status" value="1"/>
</dbReference>
<dbReference type="InterPro" id="IPR038071">
    <property type="entry name" value="UROD/MetE-like_sf"/>
</dbReference>
<dbReference type="InterPro" id="IPR006361">
    <property type="entry name" value="Uroporphyrinogen_deCO2ase_HemE"/>
</dbReference>
<dbReference type="InterPro" id="IPR000257">
    <property type="entry name" value="Uroporphyrinogen_deCOase"/>
</dbReference>
<dbReference type="NCBIfam" id="TIGR01464">
    <property type="entry name" value="hemE"/>
    <property type="match status" value="1"/>
</dbReference>
<dbReference type="PANTHER" id="PTHR21091">
    <property type="entry name" value="METHYLTETRAHYDROFOLATE:HOMOCYSTEINE METHYLTRANSFERASE RELATED"/>
    <property type="match status" value="1"/>
</dbReference>
<dbReference type="PANTHER" id="PTHR21091:SF169">
    <property type="entry name" value="UROPORPHYRINOGEN DECARBOXYLASE"/>
    <property type="match status" value="1"/>
</dbReference>
<dbReference type="Pfam" id="PF01208">
    <property type="entry name" value="URO-D"/>
    <property type="match status" value="1"/>
</dbReference>
<dbReference type="SUPFAM" id="SSF51726">
    <property type="entry name" value="UROD/MetE-like"/>
    <property type="match status" value="1"/>
</dbReference>
<dbReference type="PROSITE" id="PS00906">
    <property type="entry name" value="UROD_1"/>
    <property type="match status" value="1"/>
</dbReference>
<dbReference type="PROSITE" id="PS00907">
    <property type="entry name" value="UROD_2"/>
    <property type="match status" value="1"/>
</dbReference>
<feature type="chain" id="PRO_0000187601" description="Uroporphyrinogen decarboxylase">
    <location>
        <begin position="1"/>
        <end position="361"/>
    </location>
</feature>
<feature type="binding site" evidence="1">
    <location>
        <begin position="27"/>
        <end position="31"/>
    </location>
    <ligand>
        <name>substrate</name>
    </ligand>
</feature>
<feature type="binding site" evidence="1">
    <location>
        <position position="46"/>
    </location>
    <ligand>
        <name>substrate</name>
    </ligand>
</feature>
<feature type="binding site" evidence="1">
    <location>
        <position position="77"/>
    </location>
    <ligand>
        <name>substrate</name>
    </ligand>
</feature>
<feature type="binding site" evidence="1">
    <location>
        <position position="154"/>
    </location>
    <ligand>
        <name>substrate</name>
    </ligand>
</feature>
<feature type="binding site" evidence="1">
    <location>
        <position position="209"/>
    </location>
    <ligand>
        <name>substrate</name>
    </ligand>
</feature>
<feature type="binding site" evidence="1">
    <location>
        <position position="327"/>
    </location>
    <ligand>
        <name>substrate</name>
    </ligand>
</feature>
<feature type="site" description="Transition state stabilizer" evidence="1">
    <location>
        <position position="77"/>
    </location>
</feature>
<gene>
    <name evidence="1" type="primary">hemE</name>
    <name type="ordered locus">CBU_0275</name>
</gene>